<reference key="1">
    <citation type="journal article" date="1993" name="Mol. Biol. Evol.">
        <title>Sequence relationship of retrotransposable elements R1 and R2 within and between divergent insect species.</title>
        <authorList>
            <person name="Burke W.D."/>
            <person name="Eickbush D.G."/>
            <person name="Xiong Y."/>
            <person name="Jakubczak J.L."/>
            <person name="Eickbush T.H."/>
        </authorList>
    </citation>
    <scope>NUCLEOTIDE SEQUENCE [GENOMIC DNA]</scope>
</reference>
<sequence length="869" mass="97399">VSVPPTSYRDRIMNALEESMIDVDAIRGSSARELVEIGKVALLNQPMDEGRIMSWLSDRFPDTQKPKGPIYSKTTIYHGTNKQKRKQRYALVQSLYKKDISAAARVVLDENDKIATKIPPVRHMFDYWKDVFATGGGSAATNINRAPPAPHMETLWDPVSLIEIKSARASNEKGAGPDGVTPRSWNALDDRYKRLLYNIFVFYGRVPSPIKGSRTVFTPKIEGGPDPGVFRPLSICSVILREFNKILARRFVSCYTYDERQTAYLPIDGVCINVSMLTAIIAEAKRLRKELHIAILDLVKAFNSVYHSALIDAITEAGCPPGVVDYIADMYNNVITEMQFEGKCELASILAGVYQGDPLSGPLFTLAYEKALRALNNEGRFDIADVRVNASAYSDDGLLLAMTVIGLQHNLDKFGETLAKIGLRINSRKSKTVSLVPSGREKKMKIVSNRRLLLKASELKPLTISDLWKYLGVVYTTSGPEVAKVSMDDDLSKLTKGPLKPQQRIHLLKTFVIPKHLNRLVLSRTTATGLCKMDLLIRKYVRRWLRLPGDVPVAFLYAPVKAGGKGIPCLKQWIPLMRFLRLNKAKRTGGDRIAAVLNCQLYASISHSCKTGPVSVGLWRSTNTGGLSAYWRRILIGMVDGKDLKSAQNHSSATSFNSIRMNDISGEDYIHYNQLRTNSIPTRKRTARGRPNKPTACRAGCDKLKRLQHDIQGCIRSQGGLVQRHDRVVDLLFDECETKGYAAEKVVHLRTSEELWKPDLVLKKNGRVVVVDAQVVQCGRLESDHRVKVSKYRDDPELADVIREKYAVQEVTFEACTLSYKGIWSKNSVEGLQKLGISNYCLFKIVTSVLRGSWLNWVRFNNVTTVVHW</sequence>
<name>PO21_BRACO</name>
<evidence type="ECO:0000255" key="1">
    <source>
        <dbReference type="PROSITE-ProRule" id="PRU00405"/>
    </source>
</evidence>
<accession>Q03279</accession>
<feature type="chain" id="PRO_0000058499" description="Retrovirus-related Pol polyprotein from type-1 retrotransposable element R2">
    <location>
        <begin position="1" status="less than"/>
        <end position="869"/>
    </location>
</feature>
<feature type="domain" description="Reverse transcriptase" evidence="1">
    <location>
        <begin position="199"/>
        <end position="475"/>
    </location>
</feature>
<feature type="region of interest" description="Nucleic acid-binding endonuclease">
    <location>
        <begin position="601"/>
        <end position="869"/>
    </location>
</feature>
<feature type="non-terminal residue">
    <location>
        <position position="1"/>
    </location>
</feature>
<comment type="catalytic activity">
    <reaction evidence="1">
        <text>DNA(n) + a 2'-deoxyribonucleoside 5'-triphosphate = DNA(n+1) + diphosphate</text>
        <dbReference type="Rhea" id="RHEA:22508"/>
        <dbReference type="Rhea" id="RHEA-COMP:17339"/>
        <dbReference type="Rhea" id="RHEA-COMP:17340"/>
        <dbReference type="ChEBI" id="CHEBI:33019"/>
        <dbReference type="ChEBI" id="CHEBI:61560"/>
        <dbReference type="ChEBI" id="CHEBI:173112"/>
        <dbReference type="EC" id="2.7.7.49"/>
    </reaction>
</comment>
<protein>
    <recommendedName>
        <fullName>Retrovirus-related Pol polyprotein from type-1 retrotransposable element R2</fullName>
    </recommendedName>
    <alternativeName>
        <fullName>Retrovirus-related Pol polyprotein from type I retrotransposable element R2</fullName>
    </alternativeName>
    <domain>
        <recommendedName>
            <fullName>Reverse transcriptase</fullName>
            <ecNumber>2.7.7.49</ecNumber>
        </recommendedName>
    </domain>
    <domain>
        <recommendedName>
            <fullName>Endonuclease</fullName>
        </recommendedName>
    </domain>
</protein>
<dbReference type="EC" id="2.7.7.49"/>
<dbReference type="EMBL" id="L00951">
    <property type="protein sequence ID" value="AAA29814.1"/>
    <property type="molecule type" value="Genomic_DNA"/>
</dbReference>
<dbReference type="PIR" id="G44490">
    <property type="entry name" value="G44490"/>
</dbReference>
<dbReference type="SMR" id="Q03279"/>
<dbReference type="GO" id="GO:0004519">
    <property type="term" value="F:endonuclease activity"/>
    <property type="evidence" value="ECO:0007669"/>
    <property type="project" value="UniProtKB-KW"/>
</dbReference>
<dbReference type="GO" id="GO:0003964">
    <property type="term" value="F:RNA-directed DNA polymerase activity"/>
    <property type="evidence" value="ECO:0007669"/>
    <property type="project" value="UniProtKB-KW"/>
</dbReference>
<dbReference type="CDD" id="cd01650">
    <property type="entry name" value="RT_nLTR_like"/>
    <property type="match status" value="1"/>
</dbReference>
<dbReference type="InterPro" id="IPR043502">
    <property type="entry name" value="DNA/RNA_pol_sf"/>
</dbReference>
<dbReference type="InterPro" id="IPR000477">
    <property type="entry name" value="RT_dom"/>
</dbReference>
<dbReference type="PANTHER" id="PTHR19446">
    <property type="entry name" value="REVERSE TRANSCRIPTASES"/>
    <property type="match status" value="1"/>
</dbReference>
<dbReference type="Pfam" id="PF00078">
    <property type="entry name" value="RVT_1"/>
    <property type="match status" value="1"/>
</dbReference>
<dbReference type="SUPFAM" id="SSF56672">
    <property type="entry name" value="DNA/RNA polymerases"/>
    <property type="match status" value="1"/>
</dbReference>
<dbReference type="PROSITE" id="PS50878">
    <property type="entry name" value="RT_POL"/>
    <property type="match status" value="1"/>
</dbReference>
<proteinExistence type="predicted"/>
<keyword id="KW-0255">Endonuclease</keyword>
<keyword id="KW-0378">Hydrolase</keyword>
<keyword id="KW-0540">Nuclease</keyword>
<keyword id="KW-0548">Nucleotidyltransferase</keyword>
<keyword id="KW-0695">RNA-directed DNA polymerase</keyword>
<keyword id="KW-0808">Transferase</keyword>
<keyword id="KW-0814">Transposable element</keyword>
<organism>
    <name type="scientific">Bradysia coprophila</name>
    <name type="common">Dark-winged fungus gnat</name>
    <name type="synonym">Sciara coprophila</name>
    <dbReference type="NCBI Taxonomy" id="38358"/>
    <lineage>
        <taxon>Eukaryota</taxon>
        <taxon>Metazoa</taxon>
        <taxon>Ecdysozoa</taxon>
        <taxon>Arthropoda</taxon>
        <taxon>Hexapoda</taxon>
        <taxon>Insecta</taxon>
        <taxon>Pterygota</taxon>
        <taxon>Neoptera</taxon>
        <taxon>Endopterygota</taxon>
        <taxon>Diptera</taxon>
        <taxon>Nematocera</taxon>
        <taxon>Sciaroidea</taxon>
        <taxon>Sciaridae</taxon>
        <taxon>Bradysia</taxon>
    </lineage>
</organism>